<organism>
    <name type="scientific">Syntrophotalea carbinolica (strain DSM 2380 / NBRC 103641 / GraBd1)</name>
    <name type="common">Pelobacter carbinolicus</name>
    <dbReference type="NCBI Taxonomy" id="338963"/>
    <lineage>
        <taxon>Bacteria</taxon>
        <taxon>Pseudomonadati</taxon>
        <taxon>Thermodesulfobacteriota</taxon>
        <taxon>Desulfuromonadia</taxon>
        <taxon>Desulfuromonadales</taxon>
        <taxon>Syntrophotaleaceae</taxon>
        <taxon>Syntrophotalea</taxon>
    </lineage>
</organism>
<feature type="chain" id="PRO_0000340846" description="Tetraacyldisaccharide 4'-kinase">
    <location>
        <begin position="1"/>
        <end position="357"/>
    </location>
</feature>
<feature type="binding site" evidence="1">
    <location>
        <begin position="67"/>
        <end position="74"/>
    </location>
    <ligand>
        <name>ATP</name>
        <dbReference type="ChEBI" id="CHEBI:30616"/>
    </ligand>
</feature>
<evidence type="ECO:0000255" key="1">
    <source>
        <dbReference type="HAMAP-Rule" id="MF_00409"/>
    </source>
</evidence>
<protein>
    <recommendedName>
        <fullName evidence="1">Tetraacyldisaccharide 4'-kinase</fullName>
        <ecNumber evidence="1">2.7.1.130</ecNumber>
    </recommendedName>
    <alternativeName>
        <fullName evidence="1">Lipid A 4'-kinase</fullName>
    </alternativeName>
</protein>
<dbReference type="EC" id="2.7.1.130" evidence="1"/>
<dbReference type="EMBL" id="CP000142">
    <property type="protein sequence ID" value="ABA88510.1"/>
    <property type="molecule type" value="Genomic_DNA"/>
</dbReference>
<dbReference type="RefSeq" id="WP_011340985.1">
    <property type="nucleotide sequence ID" value="NC_007498.2"/>
</dbReference>
<dbReference type="SMR" id="Q3A547"/>
<dbReference type="STRING" id="338963.Pcar_1261"/>
<dbReference type="KEGG" id="pca:Pcar_1261"/>
<dbReference type="eggNOG" id="COG1663">
    <property type="taxonomic scope" value="Bacteria"/>
</dbReference>
<dbReference type="HOGENOM" id="CLU_038816_6_0_7"/>
<dbReference type="OrthoDB" id="9766423at2"/>
<dbReference type="UniPathway" id="UPA00359">
    <property type="reaction ID" value="UER00482"/>
</dbReference>
<dbReference type="Proteomes" id="UP000002534">
    <property type="component" value="Chromosome"/>
</dbReference>
<dbReference type="GO" id="GO:0005886">
    <property type="term" value="C:plasma membrane"/>
    <property type="evidence" value="ECO:0007669"/>
    <property type="project" value="TreeGrafter"/>
</dbReference>
<dbReference type="GO" id="GO:0005524">
    <property type="term" value="F:ATP binding"/>
    <property type="evidence" value="ECO:0007669"/>
    <property type="project" value="UniProtKB-UniRule"/>
</dbReference>
<dbReference type="GO" id="GO:0009029">
    <property type="term" value="F:tetraacyldisaccharide 4'-kinase activity"/>
    <property type="evidence" value="ECO:0007669"/>
    <property type="project" value="UniProtKB-UniRule"/>
</dbReference>
<dbReference type="GO" id="GO:0009245">
    <property type="term" value="P:lipid A biosynthetic process"/>
    <property type="evidence" value="ECO:0007669"/>
    <property type="project" value="UniProtKB-UniRule"/>
</dbReference>
<dbReference type="GO" id="GO:0009244">
    <property type="term" value="P:lipopolysaccharide core region biosynthetic process"/>
    <property type="evidence" value="ECO:0007669"/>
    <property type="project" value="TreeGrafter"/>
</dbReference>
<dbReference type="HAMAP" id="MF_00409">
    <property type="entry name" value="LpxK"/>
    <property type="match status" value="1"/>
</dbReference>
<dbReference type="InterPro" id="IPR003758">
    <property type="entry name" value="LpxK"/>
</dbReference>
<dbReference type="InterPro" id="IPR027417">
    <property type="entry name" value="P-loop_NTPase"/>
</dbReference>
<dbReference type="NCBIfam" id="TIGR00682">
    <property type="entry name" value="lpxK"/>
    <property type="match status" value="1"/>
</dbReference>
<dbReference type="PANTHER" id="PTHR42724">
    <property type="entry name" value="TETRAACYLDISACCHARIDE 4'-KINASE"/>
    <property type="match status" value="1"/>
</dbReference>
<dbReference type="PANTHER" id="PTHR42724:SF1">
    <property type="entry name" value="TETRAACYLDISACCHARIDE 4'-KINASE, MITOCHONDRIAL-RELATED"/>
    <property type="match status" value="1"/>
</dbReference>
<dbReference type="Pfam" id="PF02606">
    <property type="entry name" value="LpxK"/>
    <property type="match status" value="1"/>
</dbReference>
<dbReference type="SUPFAM" id="SSF52540">
    <property type="entry name" value="P-loop containing nucleoside triphosphate hydrolases"/>
    <property type="match status" value="1"/>
</dbReference>
<proteinExistence type="inferred from homology"/>
<accession>Q3A547</accession>
<gene>
    <name evidence="1" type="primary">lpxK</name>
    <name type="ordered locus">Pcar_1261</name>
</gene>
<keyword id="KW-0067">ATP-binding</keyword>
<keyword id="KW-0418">Kinase</keyword>
<keyword id="KW-0441">Lipid A biosynthesis</keyword>
<keyword id="KW-0444">Lipid biosynthesis</keyword>
<keyword id="KW-0443">Lipid metabolism</keyword>
<keyword id="KW-0547">Nucleotide-binding</keyword>
<keyword id="KW-1185">Reference proteome</keyword>
<keyword id="KW-0808">Transferase</keyword>
<sequence>MTKLALFYRHLAVKGPCSPLEWLIFAFLLPLGWLYGAVMRLRALFYRIGWFDAYCADVPVISVGNLSVGGTGKTPVVDYLIRYCRSLDKRVAVVSRGYAGGKGAALRVVCAGQGPILDVQQAGDEPWLLARRNPAAIVIVAPHRAQGVRHAVENLGAEVVLLDDGFQHLAVSRDFDLVLLDALRPFGNGQVLPAGLLREPVSALRRGDLFVLTRCPEDLAGTADVPGPVVHCRHILEESAVDLDGEVRSLRELAGLRGIAFAGIAEPEGFFRELQSHGLTLTRTLHFSDHAAYDERAAILLKDAAKSGDYFITTEKDAVKLAHMTLPLPCFQVPLRLMFVETGQLEQKLSPIISNQR</sequence>
<reference key="1">
    <citation type="submission" date="2005-10" db="EMBL/GenBank/DDBJ databases">
        <title>Complete sequence of Pelobacter carbinolicus DSM 2380.</title>
        <authorList>
            <person name="Copeland A."/>
            <person name="Lucas S."/>
            <person name="Lapidus A."/>
            <person name="Barry K."/>
            <person name="Detter J.C."/>
            <person name="Glavina T."/>
            <person name="Hammon N."/>
            <person name="Israni S."/>
            <person name="Pitluck S."/>
            <person name="Chertkov O."/>
            <person name="Schmutz J."/>
            <person name="Larimer F."/>
            <person name="Land M."/>
            <person name="Kyrpides N."/>
            <person name="Ivanova N."/>
            <person name="Richardson P."/>
        </authorList>
    </citation>
    <scope>NUCLEOTIDE SEQUENCE [LARGE SCALE GENOMIC DNA]</scope>
    <source>
        <strain>DSM 2380 / NBRC 103641 / GraBd1</strain>
    </source>
</reference>
<comment type="function">
    <text evidence="1">Transfers the gamma-phosphate of ATP to the 4'-position of a tetraacyldisaccharide 1-phosphate intermediate (termed DS-1-P) to form tetraacyldisaccharide 1,4'-bis-phosphate (lipid IVA).</text>
</comment>
<comment type="catalytic activity">
    <reaction evidence="1">
        <text>a lipid A disaccharide + ATP = a lipid IVA + ADP + H(+)</text>
        <dbReference type="Rhea" id="RHEA:67840"/>
        <dbReference type="ChEBI" id="CHEBI:15378"/>
        <dbReference type="ChEBI" id="CHEBI:30616"/>
        <dbReference type="ChEBI" id="CHEBI:176343"/>
        <dbReference type="ChEBI" id="CHEBI:176425"/>
        <dbReference type="ChEBI" id="CHEBI:456216"/>
        <dbReference type="EC" id="2.7.1.130"/>
    </reaction>
</comment>
<comment type="pathway">
    <text evidence="1">Glycolipid biosynthesis; lipid IV(A) biosynthesis; lipid IV(A) from (3R)-3-hydroxytetradecanoyl-[acyl-carrier-protein] and UDP-N-acetyl-alpha-D-glucosamine: step 6/6.</text>
</comment>
<comment type="similarity">
    <text evidence="1">Belongs to the LpxK family.</text>
</comment>
<name>LPXK_SYNC1</name>